<comment type="function">
    <text evidence="1">FABPs are thought to play a role in the intracellular transport of long-chain fatty acids and their acyl-CoA esters. FABP2 is probably involved in triglyceride-rich lipoprotein synthesis. Binds saturated long-chain fatty acids with a high affinity, but binds with a lower affinity to unsaturated long-chain fatty acids. FABP2 may also help maintain energy homeostasis by functioning as a lipid sensor (By similarity).</text>
</comment>
<comment type="subcellular location">
    <subcellularLocation>
        <location>Cytoplasm</location>
    </subcellularLocation>
</comment>
<comment type="tissue specificity">
    <text evidence="7">Expressed in the small intestine. Expression in the mucosal cells of the ileum extends from the midvillar region to the villus tips.</text>
</comment>
<comment type="induction">
    <text evidence="7">By peptide YY.</text>
</comment>
<comment type="domain">
    <text>Forms a beta-barrel structure that accommodates the hydrophobic ligand in its interior.</text>
</comment>
<comment type="similarity">
    <text evidence="8">Belongs to the calycin superfamily. Fatty-acid binding protein (FABP) family.</text>
</comment>
<protein>
    <recommendedName>
        <fullName>Fatty acid-binding protein, intestinal</fullName>
    </recommendedName>
    <alternativeName>
        <fullName>Fatty acid-binding protein 2</fullName>
    </alternativeName>
    <alternativeName>
        <fullName>Intestinal-type fatty acid-binding protein</fullName>
        <shortName>I-FABP</shortName>
    </alternativeName>
</protein>
<proteinExistence type="evidence at protein level"/>
<reference key="1">
    <citation type="journal article" date="1984" name="Proc. Natl. Acad. Sci. U.S.A.">
        <title>Cloning of a cDNA encoding rat intestinal fatty acid binding protein.</title>
        <authorList>
            <person name="Alpers D.H."/>
            <person name="Strauss A.W."/>
            <person name="Ockner R.K."/>
            <person name="Bass N.M."/>
            <person name="Gordon J.I."/>
        </authorList>
    </citation>
    <scope>NUCLEOTIDE SEQUENCE [MRNA]</scope>
    <scope>CLEAVAGE OF INITIATOR METHIONINE</scope>
    <scope>ACETYLATION AT ALA-2</scope>
</reference>
<reference key="2">
    <citation type="journal article" date="1985" name="Chem. Phys. Lipids">
        <title>Analyzing the structures, functions and evolution of two abundant gastrointestinal fatty acid binding proteins with recombinant DNA and computational techniques.</title>
        <authorList>
            <person name="Gordon J.I."/>
            <person name="Lowe J.B."/>
        </authorList>
    </citation>
    <scope>NUCLEOTIDE SEQUENCE</scope>
</reference>
<reference key="3">
    <citation type="journal article" date="1987" name="J. Biol. Chem.">
        <title>The human and rodent intestinal fatty acid binding protein genes. A comparative analysis of their structure, expression, and linkage relationships.</title>
        <authorList>
            <person name="Sweetser D.A."/>
            <person name="Birkenmeier E.H."/>
            <person name="Klisak I.J."/>
            <person name="Zollman S."/>
            <person name="Sparkes R.S."/>
            <person name="Mohandas T."/>
            <person name="Lusis A.J."/>
            <person name="Gordon J.I."/>
        </authorList>
    </citation>
    <scope>NUCLEOTIDE SEQUENCE [GENOMIC DNA] OF 1-80</scope>
</reference>
<reference key="4">
    <citation type="journal article" date="2003" name="Biochemistry">
        <title>Temperature-induced conformational switch in intestinal fatty acid binding protein (IFABP) revealing an alternative mode for ligand binding.</title>
        <authorList>
            <person name="Arighi C.N."/>
            <person name="Rossi J.P.F.C."/>
            <person name="Delfino J.M."/>
        </authorList>
    </citation>
    <scope>PROTEIN SEQUENCE OF 30-34</scope>
    <scope>LIGAND-BINDING</scope>
</reference>
<reference key="5">
    <citation type="journal article" date="1997" name="J. Biol. Chem.">
        <title>Evidence for a role of the gut hormone PYY in the regulation of intestinal fatty acid-binding protein transcripts in differentiated subpopulations of intestinal epithelial cell hybrids.</title>
        <authorList>
            <person name="Hallden G."/>
            <person name="Aponte G.W."/>
        </authorList>
    </citation>
    <scope>TISSUE SPECIFICITY</scope>
    <scope>INDUCTION BY PEPTIDE YY</scope>
</reference>
<reference key="6">
    <citation type="journal article" date="1998" name="Protein Sci.">
        <title>Turn scanning by site-directed mutagenesis: application to the protein folding problem using the intestinal fatty acid binding protein.</title>
        <authorList>
            <person name="Kim K."/>
            <person name="Frieden C."/>
        </authorList>
    </citation>
    <scope>MUTAGENESIS OF GLY-45; ASN-55; GLY-66; GLY-76; GLY-81; GLY-87; ASP-98; GLY-100; GLY-111 AND GLY-122</scope>
</reference>
<reference evidence="13" key="7">
    <citation type="journal article" date="1989" name="J. Mol. Biol.">
        <title>Crystal structure of rat intestinal fatty-acid-binding protein. Refinement and analysis of the Escherichia coli-derived protein with bound palmitate.</title>
        <authorList>
            <person name="Sacchettini J.C."/>
            <person name="Gordon J.I."/>
            <person name="Banaszak L.J."/>
        </authorList>
    </citation>
    <scope>X-RAY CRYSTALLOGRAPHY (2.0 ANGSTROMS) IN COMPLEX WITH PALMITATE</scope>
</reference>
<reference evidence="11" key="8">
    <citation type="journal article" date="1989" name="Proc. Natl. Acad. Sci. U.S.A.">
        <title>Refined apoprotein structure of rat intestinal fatty acid binding protein produced in Escherichia coli.</title>
        <authorList>
            <person name="Sacchettini J.C."/>
            <person name="Gordon J.I."/>
            <person name="Banaszak L.J."/>
        </authorList>
    </citation>
    <scope>X-RAY CRYSTALLOGRAPHY (1.96 ANGSTROMS)</scope>
</reference>
<reference evidence="12" key="9">
    <citation type="journal article" date="1992" name="J. Biol. Chem.">
        <title>Refinement of the structure of recombinant rat intestinal fatty acid-binding apoprotein at 1.2-A resolution.</title>
        <authorList>
            <person name="Scapin G."/>
            <person name="Gordon J.I."/>
            <person name="Sacchettini J.C."/>
        </authorList>
    </citation>
    <scope>X-RAY CRYSTALLOGRAPHY (1.19 ANGSTROMS)</scope>
</reference>
<reference evidence="9 10" key="10">
    <citation type="journal article" date="1993" name="J. Biol. Chem.">
        <title>Escherichia coli-derived rat intestinal fatty acid binding protein with bound myristate at 1.5 A resolution and I-FABP Arg106--&gt;Gln with bound oleate at 1.74 A resolution.</title>
        <authorList>
            <person name="Eads J."/>
            <person name="Sacchettini J.C."/>
            <person name="Kromminga A."/>
            <person name="Gordon J.I."/>
        </authorList>
    </citation>
    <scope>X-RAY CRYSTALLOGRAPHY (1.5 ANGSTROMS) IN COMPLEX WITH MYRISTATE</scope>
</reference>
<reference key="11">
    <citation type="journal article" date="1997" name="Biochemistry">
        <title>Discrete backbone disorder in the nuclear magnetic resonance structure of apo intestinal fatty acid-binding protein: implications for the mechanism of ligand entry.</title>
        <authorList>
            <person name="Hodsdon M.E."/>
            <person name="Cistola D.P."/>
        </authorList>
    </citation>
    <scope>STRUCTURE BY NMR</scope>
</reference>
<reference key="12">
    <citation type="journal article" date="2000" name="Biophys. J.">
        <title>Properties and crystal structure of a beta-barrel folding mutant.</title>
        <authorList>
            <person name="Ropson I.J."/>
            <person name="Yowler B.C."/>
            <person name="Dalessio P.M."/>
            <person name="Banaszak L."/>
            <person name="Thompson J."/>
        </authorList>
    </citation>
    <scope>X-RAY CRYSTALLOGRAPHY (2.1 ANGSTROMS)</scope>
    <scope>MUTAGENESIS OF VAL-61</scope>
</reference>
<gene>
    <name type="primary">Fabp2</name>
    <name type="synonym">Fabpi</name>
</gene>
<name>FABPI_RAT</name>
<organism>
    <name type="scientific">Rattus norvegicus</name>
    <name type="common">Rat</name>
    <dbReference type="NCBI Taxonomy" id="10116"/>
    <lineage>
        <taxon>Eukaryota</taxon>
        <taxon>Metazoa</taxon>
        <taxon>Chordata</taxon>
        <taxon>Craniata</taxon>
        <taxon>Vertebrata</taxon>
        <taxon>Euteleostomi</taxon>
        <taxon>Mammalia</taxon>
        <taxon>Eutheria</taxon>
        <taxon>Euarchontoglires</taxon>
        <taxon>Glires</taxon>
        <taxon>Rodentia</taxon>
        <taxon>Myomorpha</taxon>
        <taxon>Muroidea</taxon>
        <taxon>Muridae</taxon>
        <taxon>Murinae</taxon>
        <taxon>Rattus</taxon>
    </lineage>
</organism>
<accession>P02693</accession>
<feature type="initiator methionine" description="Removed" evidence="5">
    <location>
        <position position="1"/>
    </location>
</feature>
<feature type="chain" id="PRO_0000067330" description="Fatty acid-binding protein, intestinal">
    <location>
        <begin position="2"/>
        <end position="132"/>
    </location>
</feature>
<feature type="binding site" evidence="4 13">
    <location>
        <position position="83"/>
    </location>
    <ligand>
        <name>hexadecanoate</name>
        <dbReference type="ChEBI" id="CHEBI:7896"/>
    </ligand>
</feature>
<feature type="binding site" evidence="6 9">
    <location>
        <position position="83"/>
    </location>
    <ligand>
        <name>tetradecanoate</name>
        <dbReference type="ChEBI" id="CHEBI:30807"/>
    </ligand>
</feature>
<feature type="binding site" evidence="4 13">
    <location>
        <position position="107"/>
    </location>
    <ligand>
        <name>hexadecanoate</name>
        <dbReference type="ChEBI" id="CHEBI:7896"/>
    </ligand>
</feature>
<feature type="binding site" evidence="6 9">
    <location>
        <position position="107"/>
    </location>
    <ligand>
        <name>tetradecanoate</name>
        <dbReference type="ChEBI" id="CHEBI:30807"/>
    </ligand>
</feature>
<feature type="modified residue" description="N-acetylalanine" evidence="5">
    <location>
        <position position="2"/>
    </location>
</feature>
<feature type="mutagenesis site" description="Small reduction in stability, impaired ligand binding." evidence="2">
    <original>G</original>
    <variation>V</variation>
    <location>
        <position position="45"/>
    </location>
</feature>
<feature type="mutagenesis site" description="No reduction in stability." evidence="2">
    <original>N</original>
    <variation>V</variation>
    <location>
        <position position="55"/>
    </location>
</feature>
<feature type="mutagenesis site" description="Reduced thermodynamic stability." evidence="3">
    <original>V</original>
    <variation>N</variation>
    <location>
        <position position="61"/>
    </location>
</feature>
<feature type="mutagenesis site" description="Large reduction in stability." evidence="2">
    <original>G</original>
    <variation>V</variation>
    <location>
        <position position="66"/>
    </location>
</feature>
<feature type="mutagenesis site" description="Reduced stability." evidence="2">
    <original>G</original>
    <variation>V</variation>
    <location>
        <position position="76"/>
    </location>
</feature>
<feature type="mutagenesis site" description="Large reduction in stability." evidence="2">
    <original>G</original>
    <variation>V</variation>
    <location>
        <position position="81"/>
    </location>
</feature>
<feature type="mutagenesis site" description="No reduction in stability, impaired ligand binding." evidence="2">
    <original>G</original>
    <variation>V</variation>
    <location>
        <position position="87"/>
    </location>
</feature>
<feature type="mutagenesis site" description="Reduced stability." evidence="2">
    <original>D</original>
    <variation>V</variation>
    <location>
        <position position="98"/>
    </location>
</feature>
<feature type="mutagenesis site" description="Large reduction in stability." evidence="2">
    <original>G</original>
    <variation>V</variation>
    <location>
        <position position="100"/>
    </location>
</feature>
<feature type="mutagenesis site" description="Small reduction in stability, impaired ligand binding." evidence="2">
    <original>G</original>
    <variation>V</variation>
    <location>
        <position position="111"/>
    </location>
</feature>
<feature type="mutagenesis site" description="Large reduction in stability." evidence="2">
    <original>G</original>
    <variation>V</variation>
    <location>
        <position position="122"/>
    </location>
</feature>
<feature type="sequence conflict" description="In Ref. 1; AAA41138." evidence="8" ref="1">
    <original>D</original>
    <variation>Y</variation>
    <location>
        <position position="10"/>
    </location>
</feature>
<feature type="sequence conflict" description="In Ref. 1; AAA41138." evidence="8" ref="1">
    <original>W</original>
    <variation>L</variation>
    <location>
        <position position="83"/>
    </location>
</feature>
<feature type="strand" evidence="16">
    <location>
        <begin position="5"/>
        <end position="14"/>
    </location>
</feature>
<feature type="helix" evidence="16">
    <location>
        <begin position="15"/>
        <end position="22"/>
    </location>
</feature>
<feature type="helix" evidence="16">
    <location>
        <begin position="26"/>
        <end position="32"/>
    </location>
</feature>
<feature type="strand" evidence="16">
    <location>
        <begin position="38"/>
        <end position="44"/>
    </location>
</feature>
<feature type="strand" evidence="16">
    <location>
        <begin position="47"/>
        <end position="53"/>
    </location>
</feature>
<feature type="strand" evidence="15">
    <location>
        <begin position="55"/>
        <end position="57"/>
    </location>
</feature>
<feature type="strand" evidence="16">
    <location>
        <begin position="58"/>
        <end position="64"/>
    </location>
</feature>
<feature type="strand" evidence="16">
    <location>
        <begin position="69"/>
        <end position="72"/>
    </location>
</feature>
<feature type="strand" evidence="14">
    <location>
        <begin position="73"/>
        <end position="76"/>
    </location>
</feature>
<feature type="strand" evidence="16">
    <location>
        <begin position="78"/>
        <end position="86"/>
    </location>
</feature>
<feature type="strand" evidence="16">
    <location>
        <begin position="89"/>
        <end position="96"/>
    </location>
</feature>
<feature type="turn" evidence="16">
    <location>
        <begin position="97"/>
        <end position="99"/>
    </location>
</feature>
<feature type="strand" evidence="16">
    <location>
        <begin position="102"/>
        <end position="110"/>
    </location>
</feature>
<feature type="strand" evidence="16">
    <location>
        <begin position="113"/>
        <end position="120"/>
    </location>
</feature>
<feature type="strand" evidence="16">
    <location>
        <begin position="123"/>
        <end position="131"/>
    </location>
</feature>
<dbReference type="EMBL" id="K01180">
    <property type="protein sequence ID" value="AAA41138.1"/>
    <property type="molecule type" value="mRNA"/>
</dbReference>
<dbReference type="EMBL" id="M35992">
    <property type="protein sequence ID" value="AAA41141.1"/>
    <property type="molecule type" value="mRNA"/>
</dbReference>
<dbReference type="EMBL" id="M18080">
    <property type="protein sequence ID" value="AAA41133.1"/>
    <property type="molecule type" value="Genomic_DNA"/>
</dbReference>
<dbReference type="PIR" id="I65761">
    <property type="entry name" value="FZRTI"/>
</dbReference>
<dbReference type="RefSeq" id="NP_037200.1">
    <property type="nucleotide sequence ID" value="NM_013068.1"/>
</dbReference>
<dbReference type="PDB" id="1A57">
    <property type="method" value="NMR"/>
    <property type="chains" value="A=2-132"/>
</dbReference>
<dbReference type="PDB" id="1AEL">
    <property type="method" value="NMR"/>
    <property type="chains" value="A=2-132"/>
</dbReference>
<dbReference type="PDB" id="1DC9">
    <property type="method" value="X-ray"/>
    <property type="resolution" value="2.10 A"/>
    <property type="chains" value="A=2-132"/>
</dbReference>
<dbReference type="PDB" id="1ICM">
    <property type="method" value="X-ray"/>
    <property type="resolution" value="1.50 A"/>
    <property type="chains" value="A=2-132"/>
</dbReference>
<dbReference type="PDB" id="1ICN">
    <property type="method" value="X-ray"/>
    <property type="resolution" value="1.74 A"/>
    <property type="chains" value="A=2-132"/>
</dbReference>
<dbReference type="PDB" id="1IFB">
    <property type="method" value="X-ray"/>
    <property type="resolution" value="1.96 A"/>
    <property type="chains" value="A=2-132"/>
</dbReference>
<dbReference type="PDB" id="1IFC">
    <property type="method" value="X-ray"/>
    <property type="resolution" value="1.19 A"/>
    <property type="chains" value="A=1-132"/>
</dbReference>
<dbReference type="PDB" id="1SA8">
    <property type="method" value="NMR"/>
    <property type="chains" value="A=2-9, A=37-132"/>
</dbReference>
<dbReference type="PDB" id="1T8V">
    <property type="method" value="NMR"/>
    <property type="chains" value="A=2-132"/>
</dbReference>
<dbReference type="PDB" id="1URE">
    <property type="method" value="NMR"/>
    <property type="chains" value="A=2-132"/>
</dbReference>
<dbReference type="PDB" id="2IFB">
    <property type="method" value="X-ray"/>
    <property type="resolution" value="2.00 A"/>
    <property type="chains" value="A=2-132"/>
</dbReference>
<dbReference type="PDB" id="3AKN">
    <property type="method" value="X-ray"/>
    <property type="resolution" value="1.60 A"/>
    <property type="chains" value="A=2-132"/>
</dbReference>
<dbReference type="PDBsum" id="1A57"/>
<dbReference type="PDBsum" id="1AEL"/>
<dbReference type="PDBsum" id="1DC9"/>
<dbReference type="PDBsum" id="1ICM"/>
<dbReference type="PDBsum" id="1ICN"/>
<dbReference type="PDBsum" id="1IFB"/>
<dbReference type="PDBsum" id="1IFC"/>
<dbReference type="PDBsum" id="1SA8"/>
<dbReference type="PDBsum" id="1T8V"/>
<dbReference type="PDBsum" id="1URE"/>
<dbReference type="PDBsum" id="2IFB"/>
<dbReference type="PDBsum" id="3AKN"/>
<dbReference type="BMRB" id="P02693"/>
<dbReference type="SMR" id="P02693"/>
<dbReference type="FunCoup" id="P02693">
    <property type="interactions" value="99"/>
</dbReference>
<dbReference type="STRING" id="10116.ENSRNOP00000030244"/>
<dbReference type="iPTMnet" id="P02693"/>
<dbReference type="PhosphoSitePlus" id="P02693"/>
<dbReference type="PaxDb" id="10116-ENSRNOP00000030244"/>
<dbReference type="DNASU" id="25598"/>
<dbReference type="Ensembl" id="ENSRNOT00000101450.1">
    <property type="protein sequence ID" value="ENSRNOP00000093186.1"/>
    <property type="gene ID" value="ENSRNOG00000024947.4"/>
</dbReference>
<dbReference type="GeneID" id="25598"/>
<dbReference type="KEGG" id="rno:25598"/>
<dbReference type="UCSC" id="RGD:2591">
    <property type="organism name" value="rat"/>
</dbReference>
<dbReference type="AGR" id="RGD:2591"/>
<dbReference type="CTD" id="2169"/>
<dbReference type="RGD" id="2591">
    <property type="gene designation" value="Fabp2"/>
</dbReference>
<dbReference type="eggNOG" id="KOG4015">
    <property type="taxonomic scope" value="Eukaryota"/>
</dbReference>
<dbReference type="GeneTree" id="ENSGT00800000124172"/>
<dbReference type="InParanoid" id="P02693"/>
<dbReference type="OrthoDB" id="9991853at2759"/>
<dbReference type="PhylomeDB" id="P02693"/>
<dbReference type="TreeFam" id="TF316894"/>
<dbReference type="Reactome" id="R-RNO-163560">
    <property type="pathway name" value="Triglyceride catabolism"/>
</dbReference>
<dbReference type="EvolutionaryTrace" id="P02693"/>
<dbReference type="PRO" id="PR:P02693"/>
<dbReference type="Proteomes" id="UP000002494">
    <property type="component" value="Chromosome 2"/>
</dbReference>
<dbReference type="GO" id="GO:0045179">
    <property type="term" value="C:apical cortex"/>
    <property type="evidence" value="ECO:0000314"/>
    <property type="project" value="RGD"/>
</dbReference>
<dbReference type="GO" id="GO:0005829">
    <property type="term" value="C:cytosol"/>
    <property type="evidence" value="ECO:0000318"/>
    <property type="project" value="GO_Central"/>
</dbReference>
<dbReference type="GO" id="GO:0005902">
    <property type="term" value="C:microvillus"/>
    <property type="evidence" value="ECO:0000314"/>
    <property type="project" value="RGD"/>
</dbReference>
<dbReference type="GO" id="GO:0005634">
    <property type="term" value="C:nucleus"/>
    <property type="evidence" value="ECO:0000318"/>
    <property type="project" value="GO_Central"/>
</dbReference>
<dbReference type="GO" id="GO:0005504">
    <property type="term" value="F:fatty acid binding"/>
    <property type="evidence" value="ECO:0000314"/>
    <property type="project" value="RGD"/>
</dbReference>
<dbReference type="GO" id="GO:0036041">
    <property type="term" value="F:long-chain fatty acid binding"/>
    <property type="evidence" value="ECO:0000314"/>
    <property type="project" value="CAFA"/>
</dbReference>
<dbReference type="GO" id="GO:0005324">
    <property type="term" value="F:long-chain fatty acid transmembrane transporter activity"/>
    <property type="evidence" value="ECO:0000314"/>
    <property type="project" value="RGD"/>
</dbReference>
<dbReference type="GO" id="GO:0006631">
    <property type="term" value="P:fatty acid metabolic process"/>
    <property type="evidence" value="ECO:0000314"/>
    <property type="project" value="RGD"/>
</dbReference>
<dbReference type="GO" id="GO:0015908">
    <property type="term" value="P:fatty acid transport"/>
    <property type="evidence" value="ECO:0000270"/>
    <property type="project" value="RGD"/>
</dbReference>
<dbReference type="GO" id="GO:0050892">
    <property type="term" value="P:intestinal absorption"/>
    <property type="evidence" value="ECO:0000314"/>
    <property type="project" value="RGD"/>
</dbReference>
<dbReference type="GO" id="GO:0098856">
    <property type="term" value="P:intestinal lipid absorption"/>
    <property type="evidence" value="ECO:0000266"/>
    <property type="project" value="RGD"/>
</dbReference>
<dbReference type="GO" id="GO:0015909">
    <property type="term" value="P:long-chain fatty acid transport"/>
    <property type="evidence" value="ECO:0000314"/>
    <property type="project" value="RGD"/>
</dbReference>
<dbReference type="CDD" id="cd19445">
    <property type="entry name" value="FABP2"/>
    <property type="match status" value="1"/>
</dbReference>
<dbReference type="FunFam" id="2.40.128.20:FF:000001">
    <property type="entry name" value="Fatty acid-binding protein, adipocyte"/>
    <property type="match status" value="1"/>
</dbReference>
<dbReference type="Gene3D" id="2.40.128.20">
    <property type="match status" value="1"/>
</dbReference>
<dbReference type="InterPro" id="IPR012674">
    <property type="entry name" value="Calycin"/>
</dbReference>
<dbReference type="InterPro" id="IPR031272">
    <property type="entry name" value="FABP2"/>
</dbReference>
<dbReference type="InterPro" id="IPR000463">
    <property type="entry name" value="Fatty_acid-bd"/>
</dbReference>
<dbReference type="InterPro" id="IPR031259">
    <property type="entry name" value="ILBP"/>
</dbReference>
<dbReference type="InterPro" id="IPR000566">
    <property type="entry name" value="Lipocln_cytosolic_FA-bd_dom"/>
</dbReference>
<dbReference type="PANTHER" id="PTHR11955">
    <property type="entry name" value="FATTY ACID BINDING PROTEIN"/>
    <property type="match status" value="1"/>
</dbReference>
<dbReference type="Pfam" id="PF00061">
    <property type="entry name" value="Lipocalin"/>
    <property type="match status" value="1"/>
</dbReference>
<dbReference type="PRINTS" id="PR00178">
    <property type="entry name" value="FATTYACIDBP"/>
</dbReference>
<dbReference type="SUPFAM" id="SSF50814">
    <property type="entry name" value="Lipocalins"/>
    <property type="match status" value="1"/>
</dbReference>
<dbReference type="PROSITE" id="PS00214">
    <property type="entry name" value="FABP"/>
    <property type="match status" value="1"/>
</dbReference>
<sequence>MAFDGTWKVDRNENYEKFMEKMGINVVKRKLGAHDNLKLTITQEGNKFTVKESSNFRNIDVVFELGVDFAYSLADGTELTGTWTMEGNKLVGKFKRVDNGKELIAVREISGNELIQTYTYEGVEAKRIFKKE</sequence>
<keyword id="KW-0002">3D-structure</keyword>
<keyword id="KW-0007">Acetylation</keyword>
<keyword id="KW-0963">Cytoplasm</keyword>
<keyword id="KW-0903">Direct protein sequencing</keyword>
<keyword id="KW-0446">Lipid-binding</keyword>
<keyword id="KW-1185">Reference proteome</keyword>
<keyword id="KW-0813">Transport</keyword>
<evidence type="ECO:0000250" key="1"/>
<evidence type="ECO:0000269" key="2">
    <source>
    </source>
</evidence>
<evidence type="ECO:0000269" key="3">
    <source>
    </source>
</evidence>
<evidence type="ECO:0000269" key="4">
    <source>
    </source>
</evidence>
<evidence type="ECO:0000269" key="5">
    <source>
    </source>
</evidence>
<evidence type="ECO:0000269" key="6">
    <source>
    </source>
</evidence>
<evidence type="ECO:0000269" key="7">
    <source>
    </source>
</evidence>
<evidence type="ECO:0000305" key="8"/>
<evidence type="ECO:0007744" key="9">
    <source>
        <dbReference type="PDB" id="1ICM"/>
    </source>
</evidence>
<evidence type="ECO:0007744" key="10">
    <source>
        <dbReference type="PDB" id="1ICN"/>
    </source>
</evidence>
<evidence type="ECO:0007744" key="11">
    <source>
        <dbReference type="PDB" id="1IFB"/>
    </source>
</evidence>
<evidence type="ECO:0007744" key="12">
    <source>
        <dbReference type="PDB" id="1IFC"/>
    </source>
</evidence>
<evidence type="ECO:0007744" key="13">
    <source>
        <dbReference type="PDB" id="2IFB"/>
    </source>
</evidence>
<evidence type="ECO:0007829" key="14">
    <source>
        <dbReference type="PDB" id="1A57"/>
    </source>
</evidence>
<evidence type="ECO:0007829" key="15">
    <source>
        <dbReference type="PDB" id="1AEL"/>
    </source>
</evidence>
<evidence type="ECO:0007829" key="16">
    <source>
        <dbReference type="PDB" id="1IFC"/>
    </source>
</evidence>